<reference key="1">
    <citation type="journal article" date="1987" name="J. Biol. Chem.">
        <title>Primary structures of bovine elastin a, b, and c deduced from the sequences of cDNA clones.</title>
        <authorList>
            <person name="Raju K."/>
            <person name="Anwar R.A."/>
        </authorList>
    </citation>
    <scope>NUCLEOTIDE SEQUENCE [MRNA]</scope>
    <scope>ALLYSINE AT LYS-105; LYS-109; LYS-252; LYS-271; LYS-275; LYS-324; LYS-327; LYS-400; LYS-404; LYS-407; LYS-445; LYS-448; LYS-489; LYS-493; LYS-544; LYS-548; LYS-552; LYS-606; LYS-609; LYS-645; LYS-649; LYS-685 AND LYS-688</scope>
</reference>
<reference key="2">
    <citation type="journal article" date="1989" name="Biochemistry">
        <title>Structure of the bovine elastin gene and S1 nuclease analysis of alternative splicing of elastin mRNA in the bovine nuchal ligament.</title>
        <authorList>
            <person name="Yeh H."/>
            <person name="Anderson N."/>
            <person name="Ornstein-Goldstein N."/>
            <person name="Bashir M.M."/>
            <person name="Rosenbloom J.C."/>
            <person name="Abrams W.R."/>
            <person name="Indik Z."/>
            <person name="Yoon K."/>
            <person name="Parks W."/>
            <person name="Mecham R."/>
            <person name="Rosenbloom J."/>
        </authorList>
    </citation>
    <scope>NUCLEOTIDE SEQUENCE [GENOMIC DNA] OF 1-27</scope>
    <source>
        <tissue>Nuchal ligament</tissue>
    </source>
</reference>
<reference key="3">
    <citation type="journal article" date="1991" name="Biochem. Cell Biol.">
        <title>Partial characterization of bovine elastin gene; comparison with the gene for human elastin.</title>
        <authorList>
            <person name="Manohar A."/>
            <person name="Shi W."/>
            <person name="Anwar R.A."/>
        </authorList>
    </citation>
    <scope>NUCLEOTIDE SEQUENCE [GENOMIC DNA] OF 1-27</scope>
</reference>
<reference key="4">
    <citation type="journal article" date="1985" name="Biochemistry">
        <title>Structure of the 3' portion of the bovine elastin gene.</title>
        <authorList>
            <person name="Cicila G."/>
            <person name="May M."/>
            <person name="Ornstein-Goldstein N."/>
            <person name="Indik Z."/>
            <person name="Morrow S."/>
            <person name="Yeh H.S."/>
            <person name="Rosenbloom J."/>
            <person name="Boyd C."/>
            <person name="Rosenbloom J."/>
            <person name="Yoon K."/>
        </authorList>
    </citation>
    <scope>NUCLEOTIDE SEQUENCE [GENOMIC DNA] OF 54-747 (ISOFORMS 4; 5; 6 AND 7)</scope>
</reference>
<reference key="5">
    <citation type="journal article" date="1987" name="Coll. Relat. Res.">
        <title>Sequence variation of bovine elastin mRNA due to alternative splicing.</title>
        <authorList>
            <person name="Yeh H."/>
            <person name="Ornstein-Goldstein N."/>
            <person name="Indik Z."/>
            <person name="Sheppard P."/>
            <person name="Anderson N."/>
            <person name="Rosenbloom J.C."/>
            <person name="Cicila G."/>
            <person name="Yoon K."/>
            <person name="Rosenbloom J."/>
        </authorList>
    </citation>
    <scope>NUCLEOTIDE SEQUENCE [GENOMIC DNA] OF 54-747 (ISOFORMS 4; 5; 6 AND 7)</scope>
</reference>
<reference key="6">
    <citation type="journal article" date="1984" name="Lab. Invest.">
        <title>Elastin: relation of protein and gene structure to disease.</title>
        <authorList>
            <person name="Rosenbloom J."/>
        </authorList>
    </citation>
    <scope>NUCLEOTIDE SEQUENCE OF 678-747</scope>
</reference>
<reference key="7">
    <citation type="journal article" date="1992" name="Biochem. Biophys. Res. Commun.">
        <title>The cysteine residues in the carboxy terminal domain of tropoelastin form an intrachain disulfide bond that stabilizes a loop structure and positively charged pocket.</title>
        <authorList>
            <person name="Brown P.L."/>
            <person name="Mecham L."/>
            <person name="Tisdale C."/>
            <person name="Mecham R.P."/>
        </authorList>
    </citation>
    <scope>DISULFIDE BOND</scope>
</reference>
<reference key="8">
    <citation type="journal article" date="2002" name="J. Biol. Chem.">
        <title>Molecular interactions of biglycan and decorin with elastic fiber components: biglycan forms a ternary complex with tropoelastin and microfibril-associated glycoprotein 1.</title>
        <authorList>
            <person name="Reinboth B."/>
            <person name="Hanssen E."/>
            <person name="Cleary E.G."/>
            <person name="Gibson M.A."/>
        </authorList>
    </citation>
    <scope>INTERACTION WITH BGN AND MFAP2</scope>
</reference>
<reference key="9">
    <citation type="journal article" date="2006" name="Mol. Cell. Biol.">
        <title>Targeted disruption of fibulin-4 abolishes elastogenesis and causes perinatal lethality in mice.</title>
        <authorList>
            <person name="McLaughlin P.J."/>
            <person name="Chen Q."/>
            <person name="Horiguchi M."/>
            <person name="Starcher B.C."/>
            <person name="Stanton J.B."/>
            <person name="Broekelmann T.J."/>
            <person name="Marmorstein A.D."/>
            <person name="McKay B."/>
            <person name="Mecham R."/>
            <person name="Nakamura T."/>
            <person name="Marmorstein L.Y."/>
        </authorList>
    </citation>
    <scope>INTERACTION WITH EFEMP2</scope>
</reference>
<reference key="10">
    <citation type="journal article" date="2016" name="J. Biol. Chem.">
        <title>Characterization of microfibrillar-associated protein 4 (MFAP4) as a tropoelastin- and fibrillin-binding protein involved in elastic fiber formation.</title>
        <authorList>
            <person name="Pilecki B."/>
            <person name="Holm A.T."/>
            <person name="Schlosser A."/>
            <person name="Moeller J.B."/>
            <person name="Wohl A.P."/>
            <person name="Zuk A.V."/>
            <person name="Heumueller S.E."/>
            <person name="Wallis R."/>
            <person name="Moestrup S.K."/>
            <person name="Sengle G."/>
            <person name="Holmskov U."/>
            <person name="Sorensen G.L."/>
        </authorList>
    </citation>
    <scope>INTERACTION WITH MFAP4</scope>
</reference>
<gene>
    <name type="primary">ELN</name>
</gene>
<name>ELN_BOVIN</name>
<feature type="signal peptide" evidence="4">
    <location>
        <begin position="1"/>
        <end position="26"/>
    </location>
</feature>
<feature type="chain" id="PRO_0000021161" description="Elastin">
    <location>
        <begin position="27"/>
        <end position="747"/>
    </location>
</feature>
<feature type="modified residue" description="4-hydroxyproline" evidence="1">
    <location>
        <position position="34"/>
    </location>
</feature>
<feature type="modified residue" description="4-hydroxyproline" evidence="1">
    <location>
        <position position="65"/>
    </location>
</feature>
<feature type="modified residue" description="4-hydroxyproline" evidence="1">
    <location>
        <position position="87"/>
    </location>
</feature>
<feature type="modified residue" description="Allysine" evidence="9">
    <location>
        <position position="105"/>
    </location>
</feature>
<feature type="modified residue" description="Allysine" evidence="9">
    <location>
        <position position="109"/>
    </location>
</feature>
<feature type="modified residue" description="4-hydroxyproline" evidence="1">
    <location>
        <position position="165"/>
    </location>
</feature>
<feature type="modified residue" description="4-hydroxyproline" evidence="1">
    <location>
        <position position="178"/>
    </location>
</feature>
<feature type="modified residue" description="4-hydroxyproline" evidence="1">
    <location>
        <position position="181"/>
    </location>
</feature>
<feature type="modified residue" description="Hydroxyproline" evidence="1">
    <location>
        <position position="188"/>
    </location>
</feature>
<feature type="modified residue" description="4-hydroxyproline" evidence="1">
    <location>
        <position position="201"/>
    </location>
</feature>
<feature type="modified residue" description="Allysine" evidence="9">
    <location>
        <position position="252"/>
    </location>
</feature>
<feature type="modified residue" description="Allysine" evidence="9">
    <location>
        <position position="271"/>
    </location>
</feature>
<feature type="modified residue" description="Allysine" evidence="9">
    <location>
        <position position="275"/>
    </location>
</feature>
<feature type="modified residue" description="4-hydroxyproline" evidence="1">
    <location>
        <position position="298"/>
    </location>
</feature>
<feature type="modified residue" description="4-hydroxyproline" evidence="1">
    <location>
        <position position="302"/>
    </location>
</feature>
<feature type="modified residue" description="Allysine" evidence="9">
    <location>
        <position position="324"/>
    </location>
</feature>
<feature type="modified residue" description="Allysine" evidence="9">
    <location>
        <position position="327"/>
    </location>
</feature>
<feature type="modified residue" description="4-hydroxyproline" evidence="1">
    <location>
        <position position="335"/>
    </location>
</feature>
<feature type="modified residue" description="4-hydroxyproline" evidence="1">
    <location>
        <position position="365"/>
    </location>
</feature>
<feature type="modified residue" description="4-hydroxyproline" evidence="1">
    <location>
        <position position="370"/>
    </location>
</feature>
<feature type="modified residue" description="4-hydroxyproline" evidence="1">
    <location>
        <position position="375"/>
    </location>
</feature>
<feature type="modified residue" description="4-hydroxyproline" evidence="1">
    <location>
        <position position="380"/>
    </location>
</feature>
<feature type="modified residue" description="4-hydroxyproline" evidence="1">
    <location>
        <position position="385"/>
    </location>
</feature>
<feature type="modified residue" description="Allysine" evidence="9">
    <location>
        <position position="400"/>
    </location>
</feature>
<feature type="modified residue" description="Allysine" evidence="9">
    <location>
        <position position="404"/>
    </location>
</feature>
<feature type="modified residue" description="Allysine" evidence="9">
    <location>
        <position position="407"/>
    </location>
</feature>
<feature type="modified residue" description="Allysine" evidence="9">
    <location>
        <position position="445"/>
    </location>
</feature>
<feature type="modified residue" description="Allysine" evidence="9">
    <location>
        <position position="448"/>
    </location>
</feature>
<feature type="modified residue" description="4-hydroxyproline" evidence="1">
    <location>
        <position position="462"/>
    </location>
</feature>
<feature type="modified residue" description="4-hydroxyproline" evidence="1">
    <location>
        <position position="478"/>
    </location>
</feature>
<feature type="modified residue" description="Allysine" evidence="9">
    <location>
        <position position="489"/>
    </location>
</feature>
<feature type="modified residue" description="Allysine" evidence="9">
    <location>
        <position position="493"/>
    </location>
</feature>
<feature type="modified residue" description="4-hydroxyproline" evidence="1">
    <location>
        <position position="513"/>
    </location>
</feature>
<feature type="modified residue" description="Allysine" evidence="9">
    <location>
        <position position="544"/>
    </location>
</feature>
<feature type="modified residue" description="Allysine" evidence="9">
    <location>
        <position position="548"/>
    </location>
</feature>
<feature type="modified residue" description="Allysine" evidence="9">
    <location>
        <position position="552"/>
    </location>
</feature>
<feature type="modified residue" description="4-hydroxyproline" evidence="1">
    <location>
        <position position="566"/>
    </location>
</feature>
<feature type="modified residue" description="4-hydroxyproline" evidence="1">
    <location>
        <position position="575"/>
    </location>
</feature>
<feature type="modified residue" description="4-hydroxyproline" evidence="1">
    <location>
        <position position="584"/>
    </location>
</feature>
<feature type="modified residue" description="4-hydroxyproline" evidence="1">
    <location>
        <position position="593"/>
    </location>
</feature>
<feature type="modified residue" description="4-hydroxyproline" evidence="1">
    <location>
        <position position="599"/>
    </location>
</feature>
<feature type="modified residue" description="Allysine" evidence="9">
    <location>
        <position position="606"/>
    </location>
</feature>
<feature type="modified residue" description="Allysine" evidence="9">
    <location>
        <position position="609"/>
    </location>
</feature>
<feature type="modified residue" description="4-hydroxyproline" evidence="1">
    <location>
        <position position="630"/>
    </location>
</feature>
<feature type="modified residue" description="Allysine" evidence="9">
    <location>
        <position position="645"/>
    </location>
</feature>
<feature type="modified residue" description="Allysine" evidence="9">
    <location>
        <position position="649"/>
    </location>
</feature>
<feature type="modified residue" description="Allysine" evidence="9">
    <location>
        <position position="685"/>
    </location>
</feature>
<feature type="modified residue" description="Allysine" evidence="9">
    <location>
        <position position="688"/>
    </location>
</feature>
<feature type="modified residue" description="4-hydroxyproline" evidence="1">
    <location>
        <position position="719"/>
    </location>
</feature>
<feature type="modified residue" description="4-hydroxyproline" evidence="1">
    <location>
        <position position="733"/>
    </location>
</feature>
<feature type="disulfide bond" evidence="6">
    <location>
        <begin position="737"/>
        <end position="742"/>
    </location>
</feature>
<feature type="splice variant" id="VSP_004240" description="In isoform 3, isoform 6 and isoform 7." evidence="10">
    <location>
        <begin position="226"/>
        <end position="259"/>
    </location>
</feature>
<feature type="splice variant" id="VSP_004239" description="In isoform 2." evidence="10">
    <location>
        <begin position="226"/>
        <end position="239"/>
    </location>
</feature>
<feature type="splice variant" id="VSP_011940" description="In isoform 6." evidence="10">
    <original>L</original>
    <variation>LALLAFAGL</variation>
    <location>
        <position position="499"/>
    </location>
</feature>
<feature type="splice variant" id="VSP_011941" description="In isoform 5." evidence="10">
    <location>
        <begin position="598"/>
        <end position="610"/>
    </location>
</feature>
<feature type="splice variant" id="VSP_011942" description="In isoform 7." evidence="10">
    <location>
        <begin position="654"/>
        <end position="676"/>
    </location>
</feature>
<feature type="splice variant" id="VSP_011943" description="In isoform 4 and isoform 7." evidence="10">
    <original>G</original>
    <variation>GVAARPGFGLSPIFPG</variation>
    <location>
        <position position="708"/>
    </location>
</feature>
<feature type="sequence conflict" description="In Ref. 2 and 3." evidence="10" ref="2 3">
    <original>MRS</original>
    <variation>MAG</variation>
    <location>
        <begin position="1"/>
        <end position="3"/>
    </location>
</feature>
<feature type="sequence conflict" description="In Ref. 2 and 3." evidence="10" ref="2 3">
    <original>E</original>
    <variation>G</variation>
    <location>
        <position position="12"/>
    </location>
</feature>
<feature type="sequence conflict" description="In Ref. 4 and 5." evidence="10" ref="4 5">
    <original>EGS</original>
    <variation>GLG</variation>
    <location>
        <begin position="78"/>
        <end position="80"/>
    </location>
</feature>
<feature type="sequence conflict" description="In Ref. 4 and 5." evidence="10" ref="4 5">
    <original>GFFGAGGGA</original>
    <variation>ALVPGGP</variation>
    <location>
        <begin position="89"/>
        <end position="97"/>
    </location>
</feature>
<feature type="sequence conflict" description="In Ref. 4 and 5." evidence="10" ref="4 5">
    <original>QVGA</original>
    <variation>PGGG</variation>
    <location>
        <begin position="191"/>
        <end position="194"/>
    </location>
</feature>
<feature type="sequence conflict" description="In Ref. 4 and 5." evidence="10" ref="4 5">
    <original>L</original>
    <variation>V</variation>
    <location>
        <position position="213"/>
    </location>
</feature>
<feature type="sequence conflict" description="In Ref. 4 and 5." evidence="10" ref="4 5">
    <original>P</original>
    <variation>A</variation>
    <location>
        <position position="292"/>
    </location>
</feature>
<feature type="sequence conflict" description="In Ref. 4 and 5." evidence="10" ref="4 5">
    <original>L</original>
    <variation>F</variation>
    <location>
        <position position="334"/>
    </location>
</feature>
<feature type="sequence conflict" description="In Ref. 4 and 5." evidence="10" ref="4 5">
    <original>L</original>
    <variation>V</variation>
    <location>
        <position position="393"/>
    </location>
</feature>
<feature type="sequence conflict" description="In Ref. 4 and 5." evidence="10" ref="4 5">
    <original>T</original>
    <variation>A</variation>
    <location>
        <position position="398"/>
    </location>
</feature>
<feature type="sequence conflict" description="In Ref. 4 and 5." evidence="10" ref="4 5">
    <original>A</original>
    <variation>G</variation>
    <location>
        <position position="413"/>
    </location>
</feature>
<feature type="sequence conflict" description="In Ref. 4 and 5." evidence="10" ref="4 5">
    <original>L</original>
    <variation>V</variation>
    <location>
        <position position="424"/>
    </location>
</feature>
<feature type="sequence conflict" description="In Ref. 4 and 5." evidence="10" ref="4 5">
    <original>P</original>
    <variation>Q</variation>
    <location>
        <position position="439"/>
    </location>
</feature>
<feature type="sequence conflict" description="In Ref. 4 and 5." evidence="10" ref="4 5">
    <original>V</original>
    <variation>L</variation>
    <location>
        <position position="460"/>
    </location>
</feature>
<feature type="sequence conflict" description="In Ref. 4 and 5." evidence="10" ref="4 5">
    <original>L</original>
    <variation>V</variation>
    <location>
        <position position="471"/>
    </location>
</feature>
<feature type="sequence conflict" description="In Ref. 4 and 5." evidence="10" ref="4 5">
    <original>A</original>
    <variation>V</variation>
    <location>
        <position position="572"/>
    </location>
</feature>
<feature type="sequence conflict" description="In Ref. 4 and 5." evidence="10" ref="4 5">
    <original>A</original>
    <variation>V</variation>
    <location>
        <position position="581"/>
    </location>
</feature>
<feature type="sequence conflict" description="In Ref. 4 and 5." evidence="10" ref="4 5">
    <original>P</original>
    <variation>F</variation>
    <location>
        <position position="595"/>
    </location>
</feature>
<feature type="sequence conflict" description="In Ref. 4 and 5." evidence="10" ref="4 5">
    <original>V</original>
    <variation>G</variation>
    <location>
        <position position="637"/>
    </location>
</feature>
<feature type="sequence conflict" description="In Ref. 6." evidence="10" ref="6">
    <location>
        <position position="681"/>
    </location>
</feature>
<protein>
    <recommendedName>
        <fullName>Elastin</fullName>
    </recommendedName>
    <alternativeName>
        <fullName>Tropoelastin</fullName>
    </alternativeName>
</protein>
<proteinExistence type="evidence at protein level"/>
<dbReference type="EMBL" id="J02717">
    <property type="protein sequence ID" value="AAA30503.1"/>
    <property type="molecule type" value="mRNA"/>
</dbReference>
<dbReference type="EMBL" id="K03505">
    <property type="protein sequence ID" value="AAA30505.1"/>
    <property type="molecule type" value="mRNA"/>
</dbReference>
<dbReference type="EMBL" id="K03506">
    <property type="protein sequence ID" value="AAA30506.1"/>
    <property type="molecule type" value="mRNA"/>
</dbReference>
<dbReference type="EMBL" id="J02855">
    <property type="protein sequence ID" value="AAA30776.1"/>
    <property type="molecule type" value="Genomic_DNA"/>
</dbReference>
<dbReference type="EMBL" id="M58652">
    <property type="protein sequence ID" value="AAA03519.2"/>
    <property type="molecule type" value="Genomic_DNA"/>
</dbReference>
<dbReference type="EMBL" id="M19372">
    <property type="protein sequence ID" value="AAA30498.1"/>
    <property type="molecule type" value="Genomic_DNA"/>
</dbReference>
<dbReference type="EMBL" id="M11422">
    <property type="protein sequence ID" value="AAA30498.1"/>
    <property type="status" value="JOINED"/>
    <property type="molecule type" value="Genomic_DNA"/>
</dbReference>
<dbReference type="EMBL" id="M19366">
    <property type="protein sequence ID" value="AAA30498.1"/>
    <property type="status" value="JOINED"/>
    <property type="molecule type" value="Genomic_DNA"/>
</dbReference>
<dbReference type="EMBL" id="M19367">
    <property type="protein sequence ID" value="AAA30498.1"/>
    <property type="status" value="JOINED"/>
    <property type="molecule type" value="Genomic_DNA"/>
</dbReference>
<dbReference type="EMBL" id="M19368">
    <property type="protein sequence ID" value="AAA30498.1"/>
    <property type="status" value="JOINED"/>
    <property type="molecule type" value="Genomic_DNA"/>
</dbReference>
<dbReference type="EMBL" id="M19369">
    <property type="protein sequence ID" value="AAA30498.1"/>
    <property type="status" value="JOINED"/>
    <property type="molecule type" value="Genomic_DNA"/>
</dbReference>
<dbReference type="EMBL" id="M19370">
    <property type="protein sequence ID" value="AAA30498.1"/>
    <property type="status" value="JOINED"/>
    <property type="molecule type" value="Genomic_DNA"/>
</dbReference>
<dbReference type="EMBL" id="M19371">
    <property type="protein sequence ID" value="AAA30498.1"/>
    <property type="status" value="JOINED"/>
    <property type="molecule type" value="Genomic_DNA"/>
</dbReference>
<dbReference type="EMBL" id="M22771">
    <property type="protein sequence ID" value="AAA30498.1"/>
    <property type="status" value="JOINED"/>
    <property type="molecule type" value="Genomic_DNA"/>
</dbReference>
<dbReference type="EMBL" id="M22772">
    <property type="protein sequence ID" value="AAA30498.1"/>
    <property type="status" value="JOINED"/>
    <property type="molecule type" value="Genomic_DNA"/>
</dbReference>
<dbReference type="EMBL" id="M22773">
    <property type="protein sequence ID" value="AAA30498.1"/>
    <property type="status" value="JOINED"/>
    <property type="molecule type" value="Genomic_DNA"/>
</dbReference>
<dbReference type="EMBL" id="M22774">
    <property type="protein sequence ID" value="AAA30498.1"/>
    <property type="status" value="JOINED"/>
    <property type="molecule type" value="Genomic_DNA"/>
</dbReference>
<dbReference type="EMBL" id="M22775">
    <property type="protein sequence ID" value="AAA30498.1"/>
    <property type="status" value="JOINED"/>
    <property type="molecule type" value="Genomic_DNA"/>
</dbReference>
<dbReference type="EMBL" id="M22988">
    <property type="protein sequence ID" value="AAA30498.1"/>
    <property type="status" value="JOINED"/>
    <property type="molecule type" value="Genomic_DNA"/>
</dbReference>
<dbReference type="EMBL" id="M23010">
    <property type="protein sequence ID" value="AAA30498.1"/>
    <property type="status" value="JOINED"/>
    <property type="molecule type" value="Genomic_DNA"/>
</dbReference>
<dbReference type="EMBL" id="M19372">
    <property type="protein sequence ID" value="AAA30499.1"/>
    <property type="molecule type" value="Genomic_DNA"/>
</dbReference>
<dbReference type="EMBL" id="M11422">
    <property type="protein sequence ID" value="AAA30499.1"/>
    <property type="status" value="JOINED"/>
    <property type="molecule type" value="Genomic_DNA"/>
</dbReference>
<dbReference type="EMBL" id="M19366">
    <property type="protein sequence ID" value="AAA30499.1"/>
    <property type="status" value="JOINED"/>
    <property type="molecule type" value="Genomic_DNA"/>
</dbReference>
<dbReference type="EMBL" id="M19368">
    <property type="protein sequence ID" value="AAA30499.1"/>
    <property type="status" value="JOINED"/>
    <property type="molecule type" value="Genomic_DNA"/>
</dbReference>
<dbReference type="EMBL" id="M19369">
    <property type="protein sequence ID" value="AAA30499.1"/>
    <property type="status" value="JOINED"/>
    <property type="molecule type" value="Genomic_DNA"/>
</dbReference>
<dbReference type="EMBL" id="M19370">
    <property type="protein sequence ID" value="AAA30499.1"/>
    <property type="status" value="JOINED"/>
    <property type="molecule type" value="Genomic_DNA"/>
</dbReference>
<dbReference type="EMBL" id="M19371">
    <property type="protein sequence ID" value="AAA30499.1"/>
    <property type="status" value="JOINED"/>
    <property type="molecule type" value="Genomic_DNA"/>
</dbReference>
<dbReference type="EMBL" id="M22771">
    <property type="protein sequence ID" value="AAA30499.1"/>
    <property type="status" value="JOINED"/>
    <property type="molecule type" value="Genomic_DNA"/>
</dbReference>
<dbReference type="EMBL" id="M22772">
    <property type="protein sequence ID" value="AAA30499.1"/>
    <property type="status" value="JOINED"/>
    <property type="molecule type" value="Genomic_DNA"/>
</dbReference>
<dbReference type="EMBL" id="M22773">
    <property type="protein sequence ID" value="AAA30499.1"/>
    <property type="status" value="JOINED"/>
    <property type="molecule type" value="Genomic_DNA"/>
</dbReference>
<dbReference type="EMBL" id="M22774">
    <property type="protein sequence ID" value="AAA30499.1"/>
    <property type="status" value="JOINED"/>
    <property type="molecule type" value="Genomic_DNA"/>
</dbReference>
<dbReference type="EMBL" id="M22775">
    <property type="protein sequence ID" value="AAA30499.1"/>
    <property type="status" value="JOINED"/>
    <property type="molecule type" value="Genomic_DNA"/>
</dbReference>
<dbReference type="EMBL" id="M22988">
    <property type="protein sequence ID" value="AAA30499.1"/>
    <property type="status" value="JOINED"/>
    <property type="molecule type" value="Genomic_DNA"/>
</dbReference>
<dbReference type="EMBL" id="M23010">
    <property type="protein sequence ID" value="AAA30499.1"/>
    <property type="status" value="JOINED"/>
    <property type="molecule type" value="Genomic_DNA"/>
</dbReference>
<dbReference type="EMBL" id="M19372">
    <property type="protein sequence ID" value="AAA30500.1"/>
    <property type="molecule type" value="Genomic_DNA"/>
</dbReference>
<dbReference type="EMBL" id="M11422">
    <property type="protein sequence ID" value="AAA30500.1"/>
    <property type="status" value="JOINED"/>
    <property type="molecule type" value="Genomic_DNA"/>
</dbReference>
<dbReference type="EMBL" id="M19366">
    <property type="protein sequence ID" value="AAA30500.1"/>
    <property type="status" value="JOINED"/>
    <property type="molecule type" value="Genomic_DNA"/>
</dbReference>
<dbReference type="EMBL" id="M19367">
    <property type="protein sequence ID" value="AAA30500.1"/>
    <property type="status" value="JOINED"/>
    <property type="molecule type" value="Genomic_DNA"/>
</dbReference>
<dbReference type="EMBL" id="M19368">
    <property type="protein sequence ID" value="AAA30500.1"/>
    <property type="status" value="JOINED"/>
    <property type="molecule type" value="Genomic_DNA"/>
</dbReference>
<dbReference type="EMBL" id="M19369">
    <property type="protein sequence ID" value="AAA30500.1"/>
    <property type="status" value="JOINED"/>
    <property type="molecule type" value="Genomic_DNA"/>
</dbReference>
<dbReference type="EMBL" id="M19370">
    <property type="protein sequence ID" value="AAA30500.1"/>
    <property type="status" value="JOINED"/>
    <property type="molecule type" value="Genomic_DNA"/>
</dbReference>
<dbReference type="EMBL" id="M19371">
    <property type="protein sequence ID" value="AAA30500.1"/>
    <property type="status" value="JOINED"/>
    <property type="molecule type" value="Genomic_DNA"/>
</dbReference>
<dbReference type="EMBL" id="M22771">
    <property type="protein sequence ID" value="AAA30500.1"/>
    <property type="status" value="JOINED"/>
    <property type="molecule type" value="Genomic_DNA"/>
</dbReference>
<dbReference type="EMBL" id="M22772">
    <property type="protein sequence ID" value="AAA30500.1"/>
    <property type="status" value="JOINED"/>
    <property type="molecule type" value="Genomic_DNA"/>
</dbReference>
<dbReference type="EMBL" id="M22773">
    <property type="protein sequence ID" value="AAA30500.1"/>
    <property type="status" value="JOINED"/>
    <property type="molecule type" value="Genomic_DNA"/>
</dbReference>
<dbReference type="EMBL" id="M22774">
    <property type="protein sequence ID" value="AAA30500.1"/>
    <property type="status" value="JOINED"/>
    <property type="molecule type" value="Genomic_DNA"/>
</dbReference>
<dbReference type="EMBL" id="M22988">
    <property type="protein sequence ID" value="AAA30500.1"/>
    <property type="status" value="JOINED"/>
    <property type="molecule type" value="Genomic_DNA"/>
</dbReference>
<dbReference type="EMBL" id="M19372">
    <property type="protein sequence ID" value="AAA30501.1"/>
    <property type="molecule type" value="Genomic_DNA"/>
</dbReference>
<dbReference type="EMBL" id="M11422">
    <property type="protein sequence ID" value="AAA30501.1"/>
    <property type="status" value="JOINED"/>
    <property type="molecule type" value="Genomic_DNA"/>
</dbReference>
<dbReference type="EMBL" id="M19366">
    <property type="protein sequence ID" value="AAA30501.1"/>
    <property type="status" value="JOINED"/>
    <property type="molecule type" value="Genomic_DNA"/>
</dbReference>
<dbReference type="EMBL" id="M19367">
    <property type="protein sequence ID" value="AAA30501.1"/>
    <property type="status" value="JOINED"/>
    <property type="molecule type" value="Genomic_DNA"/>
</dbReference>
<dbReference type="EMBL" id="M19368">
    <property type="protein sequence ID" value="AAA30501.1"/>
    <property type="status" value="JOINED"/>
    <property type="molecule type" value="Genomic_DNA"/>
</dbReference>
<dbReference type="EMBL" id="M19369">
    <property type="protein sequence ID" value="AAA30501.1"/>
    <property type="status" value="JOINED"/>
    <property type="molecule type" value="Genomic_DNA"/>
</dbReference>
<dbReference type="EMBL" id="M19370">
    <property type="protein sequence ID" value="AAA30501.1"/>
    <property type="status" value="JOINED"/>
    <property type="molecule type" value="Genomic_DNA"/>
</dbReference>
<dbReference type="EMBL" id="M19371">
    <property type="protein sequence ID" value="AAA30501.1"/>
    <property type="status" value="JOINED"/>
    <property type="molecule type" value="Genomic_DNA"/>
</dbReference>
<dbReference type="EMBL" id="M22771">
    <property type="protein sequence ID" value="AAA30501.1"/>
    <property type="status" value="JOINED"/>
    <property type="molecule type" value="Genomic_DNA"/>
</dbReference>
<dbReference type="EMBL" id="M22772">
    <property type="protein sequence ID" value="AAA30501.1"/>
    <property type="status" value="JOINED"/>
    <property type="molecule type" value="Genomic_DNA"/>
</dbReference>
<dbReference type="EMBL" id="M22773">
    <property type="protein sequence ID" value="AAA30501.1"/>
    <property type="status" value="JOINED"/>
    <property type="molecule type" value="Genomic_DNA"/>
</dbReference>
<dbReference type="EMBL" id="M22774">
    <property type="protein sequence ID" value="AAA30501.1"/>
    <property type="status" value="JOINED"/>
    <property type="molecule type" value="Genomic_DNA"/>
</dbReference>
<dbReference type="EMBL" id="M22775">
    <property type="protein sequence ID" value="AAA30501.1"/>
    <property type="status" value="JOINED"/>
    <property type="molecule type" value="Genomic_DNA"/>
</dbReference>
<dbReference type="EMBL" id="M22988">
    <property type="protein sequence ID" value="AAA30501.1"/>
    <property type="status" value="JOINED"/>
    <property type="molecule type" value="Genomic_DNA"/>
</dbReference>
<dbReference type="EMBL" id="M31898">
    <property type="protein sequence ID" value="AAA96417.1"/>
    <property type="molecule type" value="Genomic_DNA"/>
</dbReference>
<dbReference type="EMBL" id="M31894">
    <property type="protein sequence ID" value="AAA96417.1"/>
    <property type="status" value="JOINED"/>
    <property type="molecule type" value="Genomic_DNA"/>
</dbReference>
<dbReference type="EMBL" id="M31895">
    <property type="protein sequence ID" value="AAA96417.1"/>
    <property type="status" value="JOINED"/>
    <property type="molecule type" value="Genomic_DNA"/>
</dbReference>
<dbReference type="EMBL" id="M31896">
    <property type="protein sequence ID" value="AAA96417.1"/>
    <property type="status" value="JOINED"/>
    <property type="molecule type" value="Genomic_DNA"/>
</dbReference>
<dbReference type="EMBL" id="M31897">
    <property type="protein sequence ID" value="AAA96417.1"/>
    <property type="status" value="JOINED"/>
    <property type="molecule type" value="Genomic_DNA"/>
</dbReference>
<dbReference type="PIR" id="A31865">
    <property type="entry name" value="EABO"/>
</dbReference>
<dbReference type="CORUM" id="P04985"/>
<dbReference type="DIP" id="DIP-35453N"/>
<dbReference type="FunCoup" id="P04985">
    <property type="interactions" value="99"/>
</dbReference>
<dbReference type="IntAct" id="P04985">
    <property type="interactions" value="4"/>
</dbReference>
<dbReference type="STRING" id="9913.ENSBTAP00000069595"/>
<dbReference type="eggNOG" id="ENOG502RYNR">
    <property type="taxonomic scope" value="Eukaryota"/>
</dbReference>
<dbReference type="InParanoid" id="P04985"/>
<dbReference type="CD-CODE" id="67447146">
    <property type="entry name" value="Synthetic Condensate 000250"/>
</dbReference>
<dbReference type="Proteomes" id="UP000009136">
    <property type="component" value="Unplaced"/>
</dbReference>
<dbReference type="GO" id="GO:0071953">
    <property type="term" value="C:elastic fiber"/>
    <property type="evidence" value="ECO:0000314"/>
    <property type="project" value="AgBase"/>
</dbReference>
<dbReference type="GO" id="GO:0005576">
    <property type="term" value="C:extracellular region"/>
    <property type="evidence" value="ECO:0007669"/>
    <property type="project" value="UniProtKB-KW"/>
</dbReference>
<dbReference type="GO" id="GO:0005201">
    <property type="term" value="F:extracellular matrix structural constituent"/>
    <property type="evidence" value="ECO:0007669"/>
    <property type="project" value="InterPro"/>
</dbReference>
<dbReference type="DisProt" id="DP01801"/>
<dbReference type="InterPro" id="IPR003979">
    <property type="entry name" value="Tropoelastin"/>
</dbReference>
<dbReference type="PANTHER" id="PTHR24018">
    <property type="entry name" value="ELASTIN"/>
    <property type="match status" value="1"/>
</dbReference>
<dbReference type="PANTHER" id="PTHR24018:SF5">
    <property type="entry name" value="ELASTIN"/>
    <property type="match status" value="1"/>
</dbReference>
<dbReference type="PRINTS" id="PR01500">
    <property type="entry name" value="TROPOELASTIN"/>
</dbReference>
<evidence type="ECO:0000250" key="1"/>
<evidence type="ECO:0000250" key="2">
    <source>
        <dbReference type="UniProtKB" id="P15502"/>
    </source>
</evidence>
<evidence type="ECO:0000250" key="3">
    <source>
        <dbReference type="UniProtKB" id="P54320"/>
    </source>
</evidence>
<evidence type="ECO:0000250" key="4">
    <source>
        <dbReference type="UniProtKB" id="Q99372"/>
    </source>
</evidence>
<evidence type="ECO:0000269" key="5">
    <source>
    </source>
</evidence>
<evidence type="ECO:0000269" key="6">
    <source>
    </source>
</evidence>
<evidence type="ECO:0000269" key="7">
    <source>
    </source>
</evidence>
<evidence type="ECO:0000269" key="8">
    <source>
    </source>
</evidence>
<evidence type="ECO:0000269" key="9">
    <source>
    </source>
</evidence>
<evidence type="ECO:0000305" key="10"/>
<keyword id="KW-0025">Alternative splicing</keyword>
<keyword id="KW-1015">Disulfide bond</keyword>
<keyword id="KW-0272">Extracellular matrix</keyword>
<keyword id="KW-0379">Hydroxylation</keyword>
<keyword id="KW-1185">Reference proteome</keyword>
<keyword id="KW-0677">Repeat</keyword>
<keyword id="KW-0964">Secreted</keyword>
<keyword id="KW-0732">Signal</keyword>
<sequence length="747" mass="64229">MRSLTAAARRPEVLLLLLCILQPSQPGGVPGAVPGGVPGGVFFPGAGLGGLGVGGLGPGVKPAKPGVGGLVGPGLGAEGSALPGAFPGGFFGAGGGAAGAAAAYKAAAKAGAAGLGVGGIGGVGGLGVSTGAVVPQLGAGVGAGVKPGKVPGVGLPGVYPGGVLPGAGARFPGIGVLPGVPTGAGVKPKAQVGAGAFAGIPGVGPFGGQQPGLPLGYPIKAPKLPAGYGLPYKTGKLPYGFGPGGVAGSAGKAGYPTGTGVGPQAAAAAAKAAAKLGAGGAGVLPGVGVGGPGIPGAPGAIPGIGGIAGVGAPDAAAAAAAAAKAAKFGAAGGLPGVGVPGVGVPGVGVPGVGVPGVGVPGVGVPGVGVPGVGVPGVGVPGVGVPGVGVPGALSPAATAKAAAKAAKFGARGAVGIGGIPTFGLGPGGFPGIGDAAAAPAAAAAKAAKIGAGGVGALGGVVPGAPGAIPGLPGVGGVPGVGIPAAAAAKAAAKAAQFGLGPGVGVAPGVGVVPGVGVVPGVGVAPGIGLGPGGVIGAGVPAAAKSAAKAAAKAQFRAAAGLPAGVPGLGVGAGVPGLGVGAGVPGLGVGAGVPGPGAVPGTLAAAKAAKFGPGGVGALGGVGDLGGAGIPGGVAGVVPAAAAAAKAAAKAAQFGLGGVGGLGVGGLGAVPGAVGLGGVSPAAAAKAAKFGAAGLGGVLGAGQPFPIGGGAGGLGVGGKPPKPFGGALGALGFPGGACLGKSCGRKRK</sequence>
<organism>
    <name type="scientific">Bos taurus</name>
    <name type="common">Bovine</name>
    <dbReference type="NCBI Taxonomy" id="9913"/>
    <lineage>
        <taxon>Eukaryota</taxon>
        <taxon>Metazoa</taxon>
        <taxon>Chordata</taxon>
        <taxon>Craniata</taxon>
        <taxon>Vertebrata</taxon>
        <taxon>Euteleostomi</taxon>
        <taxon>Mammalia</taxon>
        <taxon>Eutheria</taxon>
        <taxon>Laurasiatheria</taxon>
        <taxon>Artiodactyla</taxon>
        <taxon>Ruminantia</taxon>
        <taxon>Pecora</taxon>
        <taxon>Bovidae</taxon>
        <taxon>Bovinae</taxon>
        <taxon>Bos</taxon>
    </lineage>
</organism>
<accession>P04985</accession>
<accession>P04986</accession>
<accession>P04987</accession>
<accession>Q28096</accession>
<accession>Q28097</accession>
<accession>Q28098</accession>
<accession>Q28099</accession>
<accession>Q28101</accession>
<accession>Q29421</accession>
<comment type="function">
    <text evidence="3">Major structural protein of tissues such as aorta and nuchal ligament, which must expand rapidly and recover completely. Molecular determinant of the late arterial morphogenesis, stabilizing arterial structure by regulating proliferation and organization of vascular smooth muscle (By similarity).</text>
</comment>
<comment type="subunit">
    <text evidence="2 5 7 8">The polymeric elastin chains are cross-linked together into an extensible 3D network. Forms a ternary complex with BGN and MFAP2. Interacts with MFAP2 via divalent cations (calcium &gt; magnesium &gt; manganese) in a dose-dependent and saturating manner (PubMed:11723132). Interacts with FBLN5 and FBN1. Forms a ternary complex with FBN1 and FBLN2 or FBLN5 (By similarity). Interacts with MFAP4 in a Ca (2+)-dependent manner; this interaction promotes ELN self-assembly (By similarity) (PubMed:11723132, PubMed:26601954). Interacts with EFEMP2 with moderate affinity (PubMed:16478991).</text>
</comment>
<comment type="subcellular location">
    <subcellularLocation>
        <location evidence="2">Secreted</location>
        <location evidence="2">Extracellular space</location>
        <location evidence="2">Extracellular matrix</location>
    </subcellularLocation>
    <text evidence="2">Extracellular matrix of elastic fibers.</text>
</comment>
<comment type="alternative products">
    <event type="alternative splicing"/>
    <isoform>
        <id>P04985-1</id>
        <name>1</name>
        <name>A</name>
        <sequence type="displayed"/>
    </isoform>
    <isoform>
        <id>P04985-2</id>
        <name>2</name>
        <name>B</name>
        <sequence type="described" ref="VSP_004239"/>
    </isoform>
    <isoform>
        <id>P04985-3</id>
        <name>3</name>
        <name>C</name>
        <sequence type="described" ref="VSP_004240"/>
    </isoform>
    <isoform>
        <id>P04985-4</id>
        <name>4</name>
        <sequence type="described" ref="VSP_011943"/>
    </isoform>
    <isoform>
        <id>P04985-5</id>
        <name>5</name>
        <name>Elastin-cBEL2</name>
        <sequence type="described" ref="VSP_011941"/>
    </isoform>
    <isoform>
        <id>P04985-6</id>
        <name>6</name>
        <name>Elastin-cBEL3</name>
        <sequence type="described" ref="VSP_004240 VSP_011940"/>
    </isoform>
    <isoform>
        <id>P04985-7</id>
        <name>7</name>
        <name>Elastin-cBEL1</name>
        <sequence type="described" ref="VSP_004240 VSP_011942 VSP_011943"/>
    </isoform>
</comment>
<comment type="PTM">
    <text>Elastin is formed through the cross-linking of its soluble precursor tropoelastin. Cross-linking is initiated through the action of lysyl oxidase on exposed lysines to form allysine. Subsequent spontaneous condensation reactions with other allysine or unmodified lysine residues result in various bi-, tri-, and tetrafunctional cross-links. The most abundant cross-links in mature elastin fibers are lysinonorleucine, allysine aldol, desmosine, and isodesmosine.</text>
</comment>
<comment type="PTM">
    <text evidence="1">Hydroxylation on proline residues within the sequence motif, GXPG, is most likely to be 4-hydroxy as this fits the requirement for 4-hydroxylation in vertebrates.</text>
</comment>
<comment type="similarity">
    <text evidence="10">Belongs to the elastin family.</text>
</comment>